<feature type="chain" id="PRO_0000386493" description="Diacylglycerol kinase">
    <location>
        <begin position="1"/>
        <end position="315"/>
    </location>
</feature>
<feature type="domain" description="DAGKc" evidence="2">
    <location>
        <begin position="1"/>
        <end position="132"/>
    </location>
</feature>
<feature type="active site" description="Proton acceptor" evidence="1">
    <location>
        <position position="273"/>
    </location>
</feature>
<feature type="binding site" evidence="2">
    <location>
        <begin position="10"/>
        <end position="14"/>
    </location>
    <ligand>
        <name>ATP</name>
        <dbReference type="ChEBI" id="CHEBI:30616"/>
    </ligand>
</feature>
<feature type="binding site" evidence="2">
    <location>
        <position position="41"/>
    </location>
    <ligand>
        <name>ATP</name>
        <dbReference type="ChEBI" id="CHEBI:30616"/>
    </ligand>
</feature>
<feature type="binding site" evidence="2">
    <location>
        <begin position="67"/>
        <end position="73"/>
    </location>
    <ligand>
        <name>ATP</name>
        <dbReference type="ChEBI" id="CHEBI:30616"/>
    </ligand>
</feature>
<feature type="binding site" evidence="2">
    <location>
        <position position="94"/>
    </location>
    <ligand>
        <name>ATP</name>
        <dbReference type="ChEBI" id="CHEBI:30616"/>
    </ligand>
</feature>
<feature type="binding site" evidence="1">
    <location>
        <position position="213"/>
    </location>
    <ligand>
        <name>Mg(2+)</name>
        <dbReference type="ChEBI" id="CHEBI:18420"/>
    </ligand>
</feature>
<feature type="binding site" evidence="1">
    <location>
        <position position="216"/>
    </location>
    <ligand>
        <name>Mg(2+)</name>
        <dbReference type="ChEBI" id="CHEBI:18420"/>
    </ligand>
</feature>
<feature type="binding site" evidence="1">
    <location>
        <position position="218"/>
    </location>
    <ligand>
        <name>Mg(2+)</name>
        <dbReference type="ChEBI" id="CHEBI:18420"/>
    </ligand>
</feature>
<proteinExistence type="inferred from homology"/>
<sequence length="315" mass="34887">MRKRARIIYNPTSGKELFKRELPDALIKLEKAGYETSAYATEKIGDATLEAERAMHENYDVLIAAGGDGTLNEVVNGIAEKPNRPKLGVIPMGTVNDFGRALHIPNDIMGALDVIIEGHSTKVDIGKMNNRYFINLAAGGQLTQVSYETPSKLKSIVGPFAYYIKGFEMLPQMKAVDLRIEYDGNVFQGEALLFFLGLTNSMAGFEKLVPDAKLDDGYFTLIIVEKSNLAELGHIMTLASRGEHTKHPKVIYEKAKAINISSFTDLQLNVDGEYGGKLPANFLNLERHIDVFAPNDIVNEELINNDHVDDNLIEE</sequence>
<organism>
    <name type="scientific">Staphylococcus aureus (strain Mu50 / ATCC 700699)</name>
    <dbReference type="NCBI Taxonomy" id="158878"/>
    <lineage>
        <taxon>Bacteria</taxon>
        <taxon>Bacillati</taxon>
        <taxon>Bacillota</taxon>
        <taxon>Bacilli</taxon>
        <taxon>Bacillales</taxon>
        <taxon>Staphylococcaceae</taxon>
        <taxon>Staphylococcus</taxon>
    </lineage>
</organism>
<accession>Q99SY8</accession>
<keyword id="KW-0067">ATP-binding</keyword>
<keyword id="KW-0418">Kinase</keyword>
<keyword id="KW-0444">Lipid biosynthesis</keyword>
<keyword id="KW-0443">Lipid metabolism</keyword>
<keyword id="KW-0460">Magnesium</keyword>
<keyword id="KW-0479">Metal-binding</keyword>
<keyword id="KW-0547">Nucleotide-binding</keyword>
<keyword id="KW-0594">Phospholipid biosynthesis</keyword>
<keyword id="KW-1208">Phospholipid metabolism</keyword>
<keyword id="KW-0808">Transferase</keyword>
<comment type="function">
    <text evidence="1">Catalyzes the phosphorylation of diacylglycerol (DAG) into phosphatidic acid. Is a key enzyme involved in the production of lipoteichoic acid by reintroducing DAG formed from the breakdown of membrane phospholipids into the phosphatidylglycerol biosynthetic pathway.</text>
</comment>
<comment type="catalytic activity">
    <reaction evidence="1">
        <text>a 1,2-diacyl-sn-glycerol + ATP = a 1,2-diacyl-sn-glycero-3-phosphate + ADP + H(+)</text>
        <dbReference type="Rhea" id="RHEA:10272"/>
        <dbReference type="ChEBI" id="CHEBI:15378"/>
        <dbReference type="ChEBI" id="CHEBI:17815"/>
        <dbReference type="ChEBI" id="CHEBI:30616"/>
        <dbReference type="ChEBI" id="CHEBI:58608"/>
        <dbReference type="ChEBI" id="CHEBI:456216"/>
        <dbReference type="EC" id="2.7.1.107"/>
    </reaction>
</comment>
<comment type="cofactor">
    <cofactor evidence="1">
        <name>Mg(2+)</name>
        <dbReference type="ChEBI" id="CHEBI:18420"/>
    </cofactor>
    <text evidence="1">Binds 1 Mg(2+) ion per subunit. This ion appears to have a structural role and is required for catalytic activity.</text>
</comment>
<comment type="subunit">
    <text evidence="1">Homodimer.</text>
</comment>
<comment type="similarity">
    <text evidence="3">Belongs to the diacylglycerol/lipid kinase family.</text>
</comment>
<reference key="1">
    <citation type="journal article" date="2001" name="Lancet">
        <title>Whole genome sequencing of meticillin-resistant Staphylococcus aureus.</title>
        <authorList>
            <person name="Kuroda M."/>
            <person name="Ohta T."/>
            <person name="Uchiyama I."/>
            <person name="Baba T."/>
            <person name="Yuzawa H."/>
            <person name="Kobayashi I."/>
            <person name="Cui L."/>
            <person name="Oguchi A."/>
            <person name="Aoki K."/>
            <person name="Nagai Y."/>
            <person name="Lian J.-Q."/>
            <person name="Ito T."/>
            <person name="Kanamori M."/>
            <person name="Matsumaru H."/>
            <person name="Maruyama A."/>
            <person name="Murakami H."/>
            <person name="Hosoyama A."/>
            <person name="Mizutani-Ui Y."/>
            <person name="Takahashi N.K."/>
            <person name="Sawano T."/>
            <person name="Inoue R."/>
            <person name="Kaito C."/>
            <person name="Sekimizu K."/>
            <person name="Hirakawa H."/>
            <person name="Kuhara S."/>
            <person name="Goto S."/>
            <person name="Yabuzaki J."/>
            <person name="Kanehisa M."/>
            <person name="Yamashita A."/>
            <person name="Oshima K."/>
            <person name="Furuya K."/>
            <person name="Yoshino C."/>
            <person name="Shiba T."/>
            <person name="Hattori M."/>
            <person name="Ogasawara N."/>
            <person name="Hayashi H."/>
            <person name="Hiramatsu K."/>
        </authorList>
    </citation>
    <scope>NUCLEOTIDE SEQUENCE [LARGE SCALE GENOMIC DNA]</scope>
    <source>
        <strain>Mu50 / ATCC 700699</strain>
    </source>
</reference>
<gene>
    <name type="primary">dagK</name>
    <name type="ordered locus">SAV1898</name>
</gene>
<evidence type="ECO:0000250" key="1">
    <source>
        <dbReference type="UniProtKB" id="Q6GFF9"/>
    </source>
</evidence>
<evidence type="ECO:0000255" key="2">
    <source>
        <dbReference type="PROSITE-ProRule" id="PRU00783"/>
    </source>
</evidence>
<evidence type="ECO:0000305" key="3"/>
<dbReference type="EC" id="2.7.1.107" evidence="1"/>
<dbReference type="EMBL" id="BA000017">
    <property type="protein sequence ID" value="BAB58060.1"/>
    <property type="molecule type" value="Genomic_DNA"/>
</dbReference>
<dbReference type="RefSeq" id="WP_001231451.1">
    <property type="nucleotide sequence ID" value="NC_002758.2"/>
</dbReference>
<dbReference type="SMR" id="Q99SY8"/>
<dbReference type="KEGG" id="sav:SAV1898"/>
<dbReference type="HOGENOM" id="CLU_045532_1_0_9"/>
<dbReference type="PhylomeDB" id="Q99SY8"/>
<dbReference type="Proteomes" id="UP000002481">
    <property type="component" value="Chromosome"/>
</dbReference>
<dbReference type="GO" id="GO:0005886">
    <property type="term" value="C:plasma membrane"/>
    <property type="evidence" value="ECO:0007669"/>
    <property type="project" value="TreeGrafter"/>
</dbReference>
<dbReference type="GO" id="GO:0005524">
    <property type="term" value="F:ATP binding"/>
    <property type="evidence" value="ECO:0007669"/>
    <property type="project" value="UniProtKB-KW"/>
</dbReference>
<dbReference type="GO" id="GO:0004143">
    <property type="term" value="F:ATP-dependent diacylglycerol kinase activity"/>
    <property type="evidence" value="ECO:0007669"/>
    <property type="project" value="UniProtKB-EC"/>
</dbReference>
<dbReference type="GO" id="GO:0046872">
    <property type="term" value="F:metal ion binding"/>
    <property type="evidence" value="ECO:0007669"/>
    <property type="project" value="UniProtKB-KW"/>
</dbReference>
<dbReference type="GO" id="GO:0008654">
    <property type="term" value="P:phospholipid biosynthetic process"/>
    <property type="evidence" value="ECO:0007669"/>
    <property type="project" value="UniProtKB-KW"/>
</dbReference>
<dbReference type="FunFam" id="2.60.200.40:FF:000015">
    <property type="entry name" value="Diacylglycerol kinase"/>
    <property type="match status" value="1"/>
</dbReference>
<dbReference type="FunFam" id="3.40.50.10330:FF:000008">
    <property type="entry name" value="Probable lipid kinase YegS"/>
    <property type="match status" value="1"/>
</dbReference>
<dbReference type="Gene3D" id="2.60.200.40">
    <property type="match status" value="1"/>
</dbReference>
<dbReference type="Gene3D" id="3.40.50.10330">
    <property type="entry name" value="Probable inorganic polyphosphate/atp-NAD kinase, domain 1"/>
    <property type="match status" value="1"/>
</dbReference>
<dbReference type="InterPro" id="IPR017438">
    <property type="entry name" value="ATP-NAD_kinase_N"/>
</dbReference>
<dbReference type="InterPro" id="IPR005218">
    <property type="entry name" value="Diacylglycerol/lipid_kinase"/>
</dbReference>
<dbReference type="InterPro" id="IPR001206">
    <property type="entry name" value="Diacylglycerol_kinase_cat_dom"/>
</dbReference>
<dbReference type="InterPro" id="IPR050187">
    <property type="entry name" value="Lipid_Phosphate_FormReg"/>
</dbReference>
<dbReference type="InterPro" id="IPR016064">
    <property type="entry name" value="NAD/diacylglycerol_kinase_sf"/>
</dbReference>
<dbReference type="InterPro" id="IPR045540">
    <property type="entry name" value="YegS/DAGK_C"/>
</dbReference>
<dbReference type="NCBIfam" id="NF009603">
    <property type="entry name" value="PRK13055.1"/>
    <property type="match status" value="1"/>
</dbReference>
<dbReference type="NCBIfam" id="NF009874">
    <property type="entry name" value="PRK13337.1"/>
    <property type="match status" value="1"/>
</dbReference>
<dbReference type="NCBIfam" id="TIGR00147">
    <property type="entry name" value="YegS/Rv2252/BmrU family lipid kinase"/>
    <property type="match status" value="1"/>
</dbReference>
<dbReference type="PANTHER" id="PTHR12358:SF106">
    <property type="entry name" value="LIPID KINASE YEGS"/>
    <property type="match status" value="1"/>
</dbReference>
<dbReference type="PANTHER" id="PTHR12358">
    <property type="entry name" value="SPHINGOSINE KINASE"/>
    <property type="match status" value="1"/>
</dbReference>
<dbReference type="Pfam" id="PF00781">
    <property type="entry name" value="DAGK_cat"/>
    <property type="match status" value="1"/>
</dbReference>
<dbReference type="Pfam" id="PF19279">
    <property type="entry name" value="YegS_C"/>
    <property type="match status" value="1"/>
</dbReference>
<dbReference type="SMART" id="SM00046">
    <property type="entry name" value="DAGKc"/>
    <property type="match status" value="1"/>
</dbReference>
<dbReference type="SUPFAM" id="SSF111331">
    <property type="entry name" value="NAD kinase/diacylglycerol kinase-like"/>
    <property type="match status" value="1"/>
</dbReference>
<dbReference type="PROSITE" id="PS50146">
    <property type="entry name" value="DAGK"/>
    <property type="match status" value="1"/>
</dbReference>
<protein>
    <recommendedName>
        <fullName>Diacylglycerol kinase</fullName>
        <shortName>DAG kinase</shortName>
        <shortName>DAGK</shortName>
        <ecNumber evidence="1">2.7.1.107</ecNumber>
    </recommendedName>
</protein>
<name>DAGK_STAAM</name>